<reference key="1">
    <citation type="submission" date="2008-10" db="EMBL/GenBank/DDBJ databases">
        <title>Genome sequence of Bacillus cereus AH187.</title>
        <authorList>
            <person name="Dodson R.J."/>
            <person name="Durkin A.S."/>
            <person name="Rosovitz M.J."/>
            <person name="Rasko D.A."/>
            <person name="Kolsto A.B."/>
            <person name="Okstad O.A."/>
            <person name="Ravel J."/>
            <person name="Sutton G."/>
        </authorList>
    </citation>
    <scope>NUCLEOTIDE SEQUENCE [LARGE SCALE GENOMIC DNA]</scope>
    <source>
        <strain>AH187</strain>
    </source>
</reference>
<proteinExistence type="inferred from homology"/>
<accession>B7HQP4</accession>
<protein>
    <recommendedName>
        <fullName evidence="1">Ribonuclease PH</fullName>
        <shortName evidence="1">RNase PH</shortName>
        <ecNumber evidence="1">2.7.7.56</ecNumber>
    </recommendedName>
    <alternativeName>
        <fullName evidence="1">tRNA nucleotidyltransferase</fullName>
    </alternativeName>
</protein>
<comment type="function">
    <text evidence="1">Phosphorolytic 3'-5' exoribonuclease that plays an important role in tRNA 3'-end maturation. Removes nucleotide residues following the 3'-CCA terminus of tRNAs; can also add nucleotides to the ends of RNA molecules by using nucleoside diphosphates as substrates, but this may not be physiologically important. Probably plays a role in initiation of 16S rRNA degradation (leading to ribosome degradation) during starvation.</text>
</comment>
<comment type="catalytic activity">
    <reaction evidence="1">
        <text>tRNA(n+1) + phosphate = tRNA(n) + a ribonucleoside 5'-diphosphate</text>
        <dbReference type="Rhea" id="RHEA:10628"/>
        <dbReference type="Rhea" id="RHEA-COMP:17343"/>
        <dbReference type="Rhea" id="RHEA-COMP:17344"/>
        <dbReference type="ChEBI" id="CHEBI:43474"/>
        <dbReference type="ChEBI" id="CHEBI:57930"/>
        <dbReference type="ChEBI" id="CHEBI:173114"/>
        <dbReference type="EC" id="2.7.7.56"/>
    </reaction>
</comment>
<comment type="subunit">
    <text evidence="1">Homohexameric ring arranged as a trimer of dimers.</text>
</comment>
<comment type="similarity">
    <text evidence="1">Belongs to the RNase PH family.</text>
</comment>
<dbReference type="EC" id="2.7.7.56" evidence="1"/>
<dbReference type="EMBL" id="CP001177">
    <property type="protein sequence ID" value="ACJ77834.1"/>
    <property type="molecule type" value="Genomic_DNA"/>
</dbReference>
<dbReference type="SMR" id="B7HQP4"/>
<dbReference type="KEGG" id="bcr:BCAH187_A4621"/>
<dbReference type="HOGENOM" id="CLU_050858_0_0_9"/>
<dbReference type="Proteomes" id="UP000002214">
    <property type="component" value="Chromosome"/>
</dbReference>
<dbReference type="GO" id="GO:0000175">
    <property type="term" value="F:3'-5'-RNA exonuclease activity"/>
    <property type="evidence" value="ECO:0007669"/>
    <property type="project" value="UniProtKB-UniRule"/>
</dbReference>
<dbReference type="GO" id="GO:0000049">
    <property type="term" value="F:tRNA binding"/>
    <property type="evidence" value="ECO:0007669"/>
    <property type="project" value="UniProtKB-UniRule"/>
</dbReference>
<dbReference type="GO" id="GO:0009022">
    <property type="term" value="F:tRNA nucleotidyltransferase activity"/>
    <property type="evidence" value="ECO:0007669"/>
    <property type="project" value="UniProtKB-UniRule"/>
</dbReference>
<dbReference type="GO" id="GO:0016075">
    <property type="term" value="P:rRNA catabolic process"/>
    <property type="evidence" value="ECO:0007669"/>
    <property type="project" value="UniProtKB-UniRule"/>
</dbReference>
<dbReference type="GO" id="GO:0006364">
    <property type="term" value="P:rRNA processing"/>
    <property type="evidence" value="ECO:0007669"/>
    <property type="project" value="UniProtKB-KW"/>
</dbReference>
<dbReference type="GO" id="GO:0008033">
    <property type="term" value="P:tRNA processing"/>
    <property type="evidence" value="ECO:0007669"/>
    <property type="project" value="UniProtKB-UniRule"/>
</dbReference>
<dbReference type="CDD" id="cd11362">
    <property type="entry name" value="RNase_PH_bact"/>
    <property type="match status" value="1"/>
</dbReference>
<dbReference type="FunFam" id="3.30.230.70:FF:000003">
    <property type="entry name" value="Ribonuclease PH"/>
    <property type="match status" value="1"/>
</dbReference>
<dbReference type="Gene3D" id="3.30.230.70">
    <property type="entry name" value="GHMP Kinase, N-terminal domain"/>
    <property type="match status" value="1"/>
</dbReference>
<dbReference type="HAMAP" id="MF_00564">
    <property type="entry name" value="RNase_PH"/>
    <property type="match status" value="1"/>
</dbReference>
<dbReference type="InterPro" id="IPR001247">
    <property type="entry name" value="ExoRNase_PH_dom1"/>
</dbReference>
<dbReference type="InterPro" id="IPR015847">
    <property type="entry name" value="ExoRNase_PH_dom2"/>
</dbReference>
<dbReference type="InterPro" id="IPR036345">
    <property type="entry name" value="ExoRNase_PH_dom2_sf"/>
</dbReference>
<dbReference type="InterPro" id="IPR027408">
    <property type="entry name" value="PNPase/RNase_PH_dom_sf"/>
</dbReference>
<dbReference type="InterPro" id="IPR020568">
    <property type="entry name" value="Ribosomal_Su5_D2-typ_SF"/>
</dbReference>
<dbReference type="InterPro" id="IPR050080">
    <property type="entry name" value="RNase_PH"/>
</dbReference>
<dbReference type="InterPro" id="IPR002381">
    <property type="entry name" value="RNase_PH_bac-type"/>
</dbReference>
<dbReference type="InterPro" id="IPR018336">
    <property type="entry name" value="RNase_PH_CS"/>
</dbReference>
<dbReference type="NCBIfam" id="TIGR01966">
    <property type="entry name" value="RNasePH"/>
    <property type="match status" value="1"/>
</dbReference>
<dbReference type="PANTHER" id="PTHR11953">
    <property type="entry name" value="EXOSOME COMPLEX COMPONENT"/>
    <property type="match status" value="1"/>
</dbReference>
<dbReference type="PANTHER" id="PTHR11953:SF0">
    <property type="entry name" value="EXOSOME COMPLEX COMPONENT RRP41"/>
    <property type="match status" value="1"/>
</dbReference>
<dbReference type="Pfam" id="PF01138">
    <property type="entry name" value="RNase_PH"/>
    <property type="match status" value="1"/>
</dbReference>
<dbReference type="Pfam" id="PF03725">
    <property type="entry name" value="RNase_PH_C"/>
    <property type="match status" value="1"/>
</dbReference>
<dbReference type="SUPFAM" id="SSF55666">
    <property type="entry name" value="Ribonuclease PH domain 2-like"/>
    <property type="match status" value="1"/>
</dbReference>
<dbReference type="SUPFAM" id="SSF54211">
    <property type="entry name" value="Ribosomal protein S5 domain 2-like"/>
    <property type="match status" value="1"/>
</dbReference>
<dbReference type="PROSITE" id="PS01277">
    <property type="entry name" value="RIBONUCLEASE_PH"/>
    <property type="match status" value="1"/>
</dbReference>
<evidence type="ECO:0000255" key="1">
    <source>
        <dbReference type="HAMAP-Rule" id="MF_00564"/>
    </source>
</evidence>
<name>RNPH_BACC7</name>
<sequence>MRVDGREKTELRHIHIHTNYLKHPEGSVLIEVGDTKVICSATIEERVPPFMRGEGKGWVTAEYAMIPRATEQRTIRESSKGKVTGRTMEIQRLIGRALRAVVDLEALGERTVWIDCDVIQADGGTRTASITGAYVAMVLAFEKLLQAEKVSKIPVKDYLAATSVGIVEEQGVVLDLNYAEDSKADVDMNVIMTGKGQFVEVQGTGEEATFSRAQLNELLDAAEQGIFQLIDMQKEALGDIVSHIE</sequence>
<keyword id="KW-0548">Nucleotidyltransferase</keyword>
<keyword id="KW-0694">RNA-binding</keyword>
<keyword id="KW-0698">rRNA processing</keyword>
<keyword id="KW-0808">Transferase</keyword>
<keyword id="KW-0819">tRNA processing</keyword>
<keyword id="KW-0820">tRNA-binding</keyword>
<feature type="chain" id="PRO_1000129321" description="Ribonuclease PH">
    <location>
        <begin position="1"/>
        <end position="245"/>
    </location>
</feature>
<feature type="binding site" evidence="1">
    <location>
        <position position="86"/>
    </location>
    <ligand>
        <name>phosphate</name>
        <dbReference type="ChEBI" id="CHEBI:43474"/>
        <note>substrate</note>
    </ligand>
</feature>
<feature type="binding site" evidence="1">
    <location>
        <begin position="124"/>
        <end position="126"/>
    </location>
    <ligand>
        <name>phosphate</name>
        <dbReference type="ChEBI" id="CHEBI:43474"/>
        <note>substrate</note>
    </ligand>
</feature>
<organism>
    <name type="scientific">Bacillus cereus (strain AH187)</name>
    <dbReference type="NCBI Taxonomy" id="405534"/>
    <lineage>
        <taxon>Bacteria</taxon>
        <taxon>Bacillati</taxon>
        <taxon>Bacillota</taxon>
        <taxon>Bacilli</taxon>
        <taxon>Bacillales</taxon>
        <taxon>Bacillaceae</taxon>
        <taxon>Bacillus</taxon>
        <taxon>Bacillus cereus group</taxon>
    </lineage>
</organism>
<gene>
    <name evidence="1" type="primary">rph</name>
    <name type="ordered locus">BCAH187_A4621</name>
</gene>